<keyword id="KW-0378">Hydrolase</keyword>
<keyword id="KW-0408">Iron</keyword>
<keyword id="KW-0479">Metal-binding</keyword>
<keyword id="KW-1185">Reference proteome</keyword>
<keyword id="KW-0862">Zinc</keyword>
<proteinExistence type="inferred from homology"/>
<comment type="function">
    <text evidence="2">Catalyzes the hydrolysis of the formamide of 2-amino-5-formylamino-6-ribosylamino-4(3H)-pyrimidinone 5'-monophosphate (FAPy) to form 2,5-diamino-6-ribosylamino-4(3H)-pyrimidinone 5'-phosphate (APy).</text>
</comment>
<comment type="catalytic activity">
    <reaction evidence="2">
        <text>2-amino-5-formylamino-6-(5-phospho-D-ribosylamino)pyrimidin-4(3H)-one + H2O = 2,5-diamino-6-(1-D-ribosylamino)pyrimidin-4(3H)-one 5'-phosphate + formate + H(+)</text>
        <dbReference type="Rhea" id="RHEA:27282"/>
        <dbReference type="ChEBI" id="CHEBI:15377"/>
        <dbReference type="ChEBI" id="CHEBI:15378"/>
        <dbReference type="ChEBI" id="CHEBI:15740"/>
        <dbReference type="ChEBI" id="CHEBI:57258"/>
        <dbReference type="ChEBI" id="CHEBI:59545"/>
        <dbReference type="EC" id="3.5.1.102"/>
    </reaction>
</comment>
<comment type="cofactor">
    <cofactor evidence="1">
        <name>Fe(2+)</name>
        <dbReference type="ChEBI" id="CHEBI:29033"/>
    </cofactor>
    <text evidence="1">Requires one Fe(2+) ion for activity.</text>
</comment>
<comment type="cofactor">
    <cofactor evidence="1">
        <name>Fe(2+)</name>
        <dbReference type="ChEBI" id="CHEBI:29033"/>
    </cofactor>
    <cofactor evidence="1">
        <name>Zn(2+)</name>
        <dbReference type="ChEBI" id="CHEBI:29105"/>
    </cofactor>
    <text evidence="1">Requires an additional second metal ion that could be Fe(2+) or Zn(2+).</text>
</comment>
<comment type="pathway">
    <text evidence="2">Cofactor biosynthesis; coenzyme F420 biosynthesis.</text>
</comment>
<comment type="pathway">
    <text evidence="2">Cofactor biosynthesis; riboflavin biosynthesis.</text>
</comment>
<comment type="subunit">
    <text evidence="2">Homodimer.</text>
</comment>
<comment type="similarity">
    <text evidence="2">Belongs to the creatininase superfamily. FAPy deformylase family.</text>
</comment>
<sequence length="233" mass="25609">MSSNNIKLKYDSGNILSKDVHSIGIIALGSHRENHGAALPIDTDSKIAANVALNVATKTGATFLGIFYGATEYDYIKHGHHLKKDDLVNKQIIPQLINIKKQLNIKSVIIVNGHGGNNLIIEDIDKISKKTELKIIFNNSIIESEGPHACTGELSMGAVLGITDMTSLKEHENFIKHPEVGMVGLKEARDNEPIINKEALTIEKEGFEVNMILGQDMLENAQKEIINEVKKLL</sequence>
<protein>
    <recommendedName>
        <fullName evidence="2">2-amino-5-formylamino-6-ribosylaminopyrimidin-4(3H)-one 5'-monophosphate deformylase</fullName>
        <shortName evidence="2">FAPy deformylase</shortName>
        <ecNumber evidence="2">3.5.1.102</ecNumber>
    </recommendedName>
    <alternativeName>
        <fullName evidence="2">Formamide hydrolase</fullName>
    </alternativeName>
</protein>
<evidence type="ECO:0000250" key="1"/>
<evidence type="ECO:0000255" key="2">
    <source>
        <dbReference type="HAMAP-Rule" id="MF_02116"/>
    </source>
</evidence>
<gene>
    <name evidence="2" type="primary">arfB</name>
    <name type="ordered locus">Msp_1177</name>
</gene>
<dbReference type="EC" id="3.5.1.102" evidence="2"/>
<dbReference type="EMBL" id="CP000102">
    <property type="protein sequence ID" value="ABC57558.1"/>
    <property type="molecule type" value="Genomic_DNA"/>
</dbReference>
<dbReference type="RefSeq" id="WP_011406757.1">
    <property type="nucleotide sequence ID" value="NC_007681.1"/>
</dbReference>
<dbReference type="SMR" id="Q2NF45"/>
<dbReference type="STRING" id="339860.Msp_1177"/>
<dbReference type="GeneID" id="41325746"/>
<dbReference type="KEGG" id="mst:Msp_1177"/>
<dbReference type="eggNOG" id="arCOG04536">
    <property type="taxonomic scope" value="Archaea"/>
</dbReference>
<dbReference type="HOGENOM" id="CLU_1192640_0_0_2"/>
<dbReference type="OrthoDB" id="46121at2157"/>
<dbReference type="UniPathway" id="UPA00071"/>
<dbReference type="UniPathway" id="UPA00275"/>
<dbReference type="Proteomes" id="UP000001931">
    <property type="component" value="Chromosome"/>
</dbReference>
<dbReference type="GO" id="GO:0043729">
    <property type="term" value="F:2-amino-5-formylamino-6-(5-phosphoribosylamino)pyrimidin-4(3H)-one formate-lyase activity"/>
    <property type="evidence" value="ECO:0007669"/>
    <property type="project" value="UniProtKB-EC"/>
</dbReference>
<dbReference type="GO" id="GO:0008198">
    <property type="term" value="F:ferrous iron binding"/>
    <property type="evidence" value="ECO:0007669"/>
    <property type="project" value="UniProtKB-UniRule"/>
</dbReference>
<dbReference type="GO" id="GO:0052645">
    <property type="term" value="P:F420-0 metabolic process"/>
    <property type="evidence" value="ECO:0007669"/>
    <property type="project" value="UniProtKB-UniRule"/>
</dbReference>
<dbReference type="GO" id="GO:0009231">
    <property type="term" value="P:riboflavin biosynthetic process"/>
    <property type="evidence" value="ECO:0007669"/>
    <property type="project" value="UniProtKB-UniRule"/>
</dbReference>
<dbReference type="Gene3D" id="3.40.50.10310">
    <property type="entry name" value="Creatininase"/>
    <property type="match status" value="1"/>
</dbReference>
<dbReference type="HAMAP" id="MF_02116">
    <property type="entry name" value="FAPy_deform"/>
    <property type="match status" value="1"/>
</dbReference>
<dbReference type="InterPro" id="IPR024087">
    <property type="entry name" value="Creatininase-like_sf"/>
</dbReference>
<dbReference type="InterPro" id="IPR003785">
    <property type="entry name" value="Creatininase/forma_Hydrolase"/>
</dbReference>
<dbReference type="InterPro" id="IPR024901">
    <property type="entry name" value="FAPy_deformylase"/>
</dbReference>
<dbReference type="NCBIfam" id="NF033501">
    <property type="entry name" value="ArfB_arch_rifla"/>
    <property type="match status" value="1"/>
</dbReference>
<dbReference type="PANTHER" id="PTHR35005:SF1">
    <property type="entry name" value="2-AMINO-5-FORMYLAMINO-6-RIBOSYLAMINOPYRIMIDIN-4(3H)-ONE 5'-MONOPHOSPHATE DEFORMYLASE"/>
    <property type="match status" value="1"/>
</dbReference>
<dbReference type="PANTHER" id="PTHR35005">
    <property type="entry name" value="3-DEHYDRO-SCYLLO-INOSOSE HYDROLASE"/>
    <property type="match status" value="1"/>
</dbReference>
<dbReference type="Pfam" id="PF02633">
    <property type="entry name" value="Creatininase"/>
    <property type="match status" value="1"/>
</dbReference>
<dbReference type="SUPFAM" id="SSF102215">
    <property type="entry name" value="Creatininase"/>
    <property type="match status" value="1"/>
</dbReference>
<name>ARFB_METST</name>
<feature type="chain" id="PRO_0000406931" description="2-amino-5-formylamino-6-ribosylaminopyrimidin-4(3H)-one 5'-monophosphate deformylase">
    <location>
        <begin position="1"/>
        <end position="233"/>
    </location>
</feature>
<feature type="binding site" evidence="2">
    <location>
        <position position="33"/>
    </location>
    <ligand>
        <name>Fe cation</name>
        <dbReference type="ChEBI" id="CHEBI:24875"/>
        <label>1</label>
    </ligand>
</feature>
<feature type="binding site" evidence="2">
    <location>
        <position position="35"/>
    </location>
    <ligand>
        <name>Fe cation</name>
        <dbReference type="ChEBI" id="CHEBI:24875"/>
        <label>2</label>
    </ligand>
</feature>
<feature type="binding site" evidence="2">
    <location>
        <position position="44"/>
    </location>
    <ligand>
        <name>Fe cation</name>
        <dbReference type="ChEBI" id="CHEBI:24875"/>
        <label>1</label>
    </ligand>
</feature>
<feature type="binding site" evidence="2">
    <location>
        <position position="44"/>
    </location>
    <ligand>
        <name>Fe cation</name>
        <dbReference type="ChEBI" id="CHEBI:24875"/>
        <label>2</label>
    </ligand>
</feature>
<feature type="binding site" evidence="2">
    <location>
        <position position="114"/>
    </location>
    <ligand>
        <name>Fe cation</name>
        <dbReference type="ChEBI" id="CHEBI:24875"/>
        <label>1</label>
    </ligand>
</feature>
<accession>Q2NF45</accession>
<reference key="1">
    <citation type="journal article" date="2006" name="J. Bacteriol.">
        <title>The genome sequence of Methanosphaera stadtmanae reveals why this human intestinal archaeon is restricted to methanol and H2 for methane formation and ATP synthesis.</title>
        <authorList>
            <person name="Fricke W.F."/>
            <person name="Seedorf H."/>
            <person name="Henne A."/>
            <person name="Kruer M."/>
            <person name="Liesegang H."/>
            <person name="Hedderich R."/>
            <person name="Gottschalk G."/>
            <person name="Thauer R.K."/>
        </authorList>
    </citation>
    <scope>NUCLEOTIDE SEQUENCE [LARGE SCALE GENOMIC DNA]</scope>
    <source>
        <strain>ATCC 43021 / DSM 3091 / JCM 11832 / MCB-3</strain>
    </source>
</reference>
<organism>
    <name type="scientific">Methanosphaera stadtmanae (strain ATCC 43021 / DSM 3091 / JCM 11832 / MCB-3)</name>
    <dbReference type="NCBI Taxonomy" id="339860"/>
    <lineage>
        <taxon>Archaea</taxon>
        <taxon>Methanobacteriati</taxon>
        <taxon>Methanobacteriota</taxon>
        <taxon>Methanomada group</taxon>
        <taxon>Methanobacteria</taxon>
        <taxon>Methanobacteriales</taxon>
        <taxon>Methanobacteriaceae</taxon>
        <taxon>Methanosphaera</taxon>
    </lineage>
</organism>